<gene>
    <name type="primary">ARID5A</name>
</gene>
<sequence>MAPPVKGKRKQSEEGEPLDPPVSPQPDGEPRSRSPVRLEEPPEAGREREEEQEEEQAFLVSLYKFMKERHTPIERVPHLGFKQINLWKIYKAVEKLGAYELVTGRRLWKNVYDELGGSPGSTSAATCTRRHYERLVLPYVRHLKGEDDKPLPPSKPRKQYKMAKEPRGDDGATERPKKVKEEKRVDQLMPAKTKTDAPDPARLPSQETPRDGMEQRGPAAGPSLPFLGASGCPEAYKRLLSSFYCRGTHGIMSPLAKKKLLAQVSKAEALQCQEEGCRHGAGGEPQAPPAAPPLESPQSPGGPAEDSRHRLTPLEGRQAPGGGLWGETQAGPRPSAPVVTGCFHAYPSEVLKPISQRPRDLFPSLKDRVLLGPPAKEEGLPAKEPPLVWGGDAGRPSAFHKGSSRKGSLYPKPKACWVSPMTKVPAESPVPLPTFPSSPGLGHKRSLAEDSSVHGSKKLRAVSPFLKEANAQECGTKPRGPDLAVSCLLGPALPEAYRGTLLRCPLNFAGTLGPLKGQATLPFSPLVIPAFPAHLLATTAPSPMTAGLMHLPPASFDSALCHRLCPASSPWHVPPATAYTAPHFSFHLNTKL</sequence>
<reference key="1">
    <citation type="submission" date="2005-09" db="EMBL/GenBank/DDBJ databases">
        <authorList>
            <consortium name="NIH - Mammalian Gene Collection (MGC) project"/>
        </authorList>
    </citation>
    <scope>NUCLEOTIDE SEQUENCE [LARGE SCALE MRNA]</scope>
    <source>
        <strain>Hereford</strain>
        <tissue>Ascending colon</tissue>
    </source>
</reference>
<dbReference type="EMBL" id="BC104604">
    <property type="protein sequence ID" value="AAI04605.1"/>
    <property type="molecule type" value="mRNA"/>
</dbReference>
<dbReference type="RefSeq" id="NP_001030426.1">
    <property type="nucleotide sequence ID" value="NM_001035349.1"/>
</dbReference>
<dbReference type="SMR" id="Q3SWY1"/>
<dbReference type="FunCoup" id="Q3SWY1">
    <property type="interactions" value="207"/>
</dbReference>
<dbReference type="STRING" id="9913.ENSBTAP00000062754"/>
<dbReference type="PaxDb" id="9913-ENSBTAP00000054489"/>
<dbReference type="Ensembl" id="ENSBTAT00000026200.5">
    <property type="protein sequence ID" value="ENSBTAP00000026200.3"/>
    <property type="gene ID" value="ENSBTAG00000014090.6"/>
</dbReference>
<dbReference type="GeneID" id="524118"/>
<dbReference type="KEGG" id="bta:524118"/>
<dbReference type="CTD" id="10865"/>
<dbReference type="VEuPathDB" id="HostDB:ENSBTAG00000014090"/>
<dbReference type="VGNC" id="VGNC:26131">
    <property type="gene designation" value="ARID5A"/>
</dbReference>
<dbReference type="eggNOG" id="KOG2744">
    <property type="taxonomic scope" value="Eukaryota"/>
</dbReference>
<dbReference type="GeneTree" id="ENSGT00940000161253"/>
<dbReference type="HOGENOM" id="CLU_032275_0_0_1"/>
<dbReference type="InParanoid" id="Q3SWY1"/>
<dbReference type="OrthoDB" id="1938591at2759"/>
<dbReference type="Proteomes" id="UP000009136">
    <property type="component" value="Chromosome 11"/>
</dbReference>
<dbReference type="Bgee" id="ENSBTAG00000014090">
    <property type="expression patterns" value="Expressed in intramuscular adipose tissue and 104 other cell types or tissues"/>
</dbReference>
<dbReference type="GO" id="GO:0005634">
    <property type="term" value="C:nucleus"/>
    <property type="evidence" value="ECO:0000318"/>
    <property type="project" value="GO_Central"/>
</dbReference>
<dbReference type="GO" id="GO:0035925">
    <property type="term" value="F:mRNA 3'-UTR AU-rich region binding"/>
    <property type="evidence" value="ECO:0000250"/>
    <property type="project" value="UniProtKB"/>
</dbReference>
<dbReference type="GO" id="GO:0000976">
    <property type="term" value="F:transcription cis-regulatory region binding"/>
    <property type="evidence" value="ECO:0000318"/>
    <property type="project" value="GO_Central"/>
</dbReference>
<dbReference type="GO" id="GO:0045087">
    <property type="term" value="P:innate immune response"/>
    <property type="evidence" value="ECO:0007669"/>
    <property type="project" value="UniProtKB-KW"/>
</dbReference>
<dbReference type="GO" id="GO:1905870">
    <property type="term" value="P:positive regulation of 3'-UTR-mediated mRNA stabilization"/>
    <property type="evidence" value="ECO:0000250"/>
    <property type="project" value="UniProtKB"/>
</dbReference>
<dbReference type="GO" id="GO:0006357">
    <property type="term" value="P:regulation of transcription by RNA polymerase II"/>
    <property type="evidence" value="ECO:0000318"/>
    <property type="project" value="GO_Central"/>
</dbReference>
<dbReference type="CDD" id="cd16884">
    <property type="entry name" value="ARID_ARID5A"/>
    <property type="match status" value="1"/>
</dbReference>
<dbReference type="FunFam" id="1.10.150.60:FF:000004">
    <property type="entry name" value="AT-rich interactive domain-containing protein 5B"/>
    <property type="match status" value="1"/>
</dbReference>
<dbReference type="Gene3D" id="1.10.150.60">
    <property type="entry name" value="ARID DNA-binding domain"/>
    <property type="match status" value="1"/>
</dbReference>
<dbReference type="InterPro" id="IPR051232">
    <property type="entry name" value="ARID/SWI1_ChromRemod"/>
</dbReference>
<dbReference type="InterPro" id="IPR001606">
    <property type="entry name" value="ARID_dom"/>
</dbReference>
<dbReference type="InterPro" id="IPR036431">
    <property type="entry name" value="ARID_dom_sf"/>
</dbReference>
<dbReference type="PANTHER" id="PTHR13964:SF25">
    <property type="entry name" value="AT-RICH INTERACTIVE DOMAIN-CONTAINING PROTEIN 5A"/>
    <property type="match status" value="1"/>
</dbReference>
<dbReference type="PANTHER" id="PTHR13964">
    <property type="entry name" value="RBP-RELATED"/>
    <property type="match status" value="1"/>
</dbReference>
<dbReference type="Pfam" id="PF01388">
    <property type="entry name" value="ARID"/>
    <property type="match status" value="1"/>
</dbReference>
<dbReference type="SMART" id="SM01014">
    <property type="entry name" value="ARID"/>
    <property type="match status" value="1"/>
</dbReference>
<dbReference type="SMART" id="SM00501">
    <property type="entry name" value="BRIGHT"/>
    <property type="match status" value="1"/>
</dbReference>
<dbReference type="SUPFAM" id="SSF46774">
    <property type="entry name" value="ARID-like"/>
    <property type="match status" value="1"/>
</dbReference>
<dbReference type="PROSITE" id="PS51011">
    <property type="entry name" value="ARID"/>
    <property type="match status" value="1"/>
</dbReference>
<organism>
    <name type="scientific">Bos taurus</name>
    <name type="common">Bovine</name>
    <dbReference type="NCBI Taxonomy" id="9913"/>
    <lineage>
        <taxon>Eukaryota</taxon>
        <taxon>Metazoa</taxon>
        <taxon>Chordata</taxon>
        <taxon>Craniata</taxon>
        <taxon>Vertebrata</taxon>
        <taxon>Euteleostomi</taxon>
        <taxon>Mammalia</taxon>
        <taxon>Eutheria</taxon>
        <taxon>Laurasiatheria</taxon>
        <taxon>Artiodactyla</taxon>
        <taxon>Ruminantia</taxon>
        <taxon>Pecora</taxon>
        <taxon>Bovidae</taxon>
        <taxon>Bovinae</taxon>
        <taxon>Bos</taxon>
    </lineage>
</organism>
<protein>
    <recommendedName>
        <fullName>AT-rich interactive domain-containing protein 5A</fullName>
        <shortName>ARID domain-containing protein 5A</shortName>
    </recommendedName>
</protein>
<proteinExistence type="evidence at transcript level"/>
<accession>Q3SWY1</accession>
<comment type="function">
    <text evidence="2">DNA-binding protein that may regulate transcription and act as a repressor by binding to AT-rich stretches in the promoter region of target genes. May act as repressor and down-regulate enhancer-dependent gene expressison. May positively regulate chondrocyte-specific transcription such as of COL2A1 in collaboration with SOX9 and positively regulate histone H3 acetylation at chondrocyte-specific genes. May stimulate early-stage chondrocyte differentiation and inhibit later stage differention. Can repress ESR1-mediated transcriptional activation; proposed to act as corepressor for selective nuclear hormone receptors. As an RNA-binding protein, involved in the regulation of inflammatory response by stabilizing selective inflammation-related mRNAs, such as STAT3 and TBX21. Also stabilizes IL6 mRNA. Binds to stem loop structures located in the 3'UTRs of IL6, STAT3 and TBX21 mRNAs; at least for STAT3 prevents binding of ZC3H12A to the mRNA stem loop structure thus inhibiting its degradation activity. Contributes to elevated IL6 levels possibly implicated in autoimmunity processes. IL6-dependent stabilization of STAT3 mRNA may promote differentiation of naive CD4+ T-cells into T-helper Th17 cells. In CD4+ T-cells may also inhibit RORC-induced Th17 cell differentiation independently of IL6 signaling. Stabilization of TBX21 mRNA contributes to elevated interferon-gamma secretion in Th1 cells possibly implicated in the establishment of septic shock. Stabilizes TNFRSF4/OX40 mRNA by binding to the conserved stem loop structure in its 3'UTR; thereby competing with the mRNA-destabilizing functions of RC3H1 and endoribonuclease ZC3H12A (By similarity).</text>
</comment>
<comment type="subunit">
    <text evidence="1 2">Interacts with SOX9. Interacts with ESR1. Interacts with RORC.</text>
</comment>
<comment type="subcellular location">
    <subcellularLocation>
        <location evidence="1 2 3">Nucleus</location>
    </subcellularLocation>
</comment>
<comment type="PTM">
    <text evidence="2">Phosphorylated by MAPK14 on serine residues involving a TLR4 signaling pathway upon lipopolysaccharide (LPS) stimulation leading to its ubiquitination and proteasomal degradation.</text>
</comment>
<comment type="PTM">
    <text evidence="2">Ubiquitinated leading to proteasomal degradation; involving WWP1 linked to MAPK14-mediated phosphorylation upon LPS stimulation.</text>
</comment>
<name>ARI5A_BOVIN</name>
<keyword id="KW-0010">Activator</keyword>
<keyword id="KW-0238">DNA-binding</keyword>
<keyword id="KW-0391">Immunity</keyword>
<keyword id="KW-0399">Innate immunity</keyword>
<keyword id="KW-1017">Isopeptide bond</keyword>
<keyword id="KW-0539">Nucleus</keyword>
<keyword id="KW-0597">Phosphoprotein</keyword>
<keyword id="KW-1185">Reference proteome</keyword>
<keyword id="KW-0678">Repressor</keyword>
<keyword id="KW-0694">RNA-binding</keyword>
<keyword id="KW-0804">Transcription</keyword>
<keyword id="KW-0805">Transcription regulation</keyword>
<keyword id="KW-0832">Ubl conjugation</keyword>
<evidence type="ECO:0000250" key="1">
    <source>
        <dbReference type="UniProtKB" id="Q03989"/>
    </source>
</evidence>
<evidence type="ECO:0000250" key="2">
    <source>
        <dbReference type="UniProtKB" id="Q3U108"/>
    </source>
</evidence>
<evidence type="ECO:0000255" key="3">
    <source>
        <dbReference type="PROSITE-ProRule" id="PRU00355"/>
    </source>
</evidence>
<evidence type="ECO:0000256" key="4">
    <source>
        <dbReference type="SAM" id="MobiDB-lite"/>
    </source>
</evidence>
<feature type="chain" id="PRO_0000288929" description="AT-rich interactive domain-containing protein 5A">
    <location>
        <begin position="1"/>
        <end position="592"/>
    </location>
</feature>
<feature type="domain" description="ARID" evidence="3">
    <location>
        <begin position="52"/>
        <end position="144"/>
    </location>
</feature>
<feature type="region of interest" description="Interaction with SOX9" evidence="2">
    <location>
        <begin position="1"/>
        <end position="299"/>
    </location>
</feature>
<feature type="region of interest" description="Disordered" evidence="4">
    <location>
        <begin position="1"/>
        <end position="53"/>
    </location>
</feature>
<feature type="region of interest" description="Disordered" evidence="4">
    <location>
        <begin position="143"/>
        <end position="225"/>
    </location>
</feature>
<feature type="region of interest" description="Disordered" evidence="4">
    <location>
        <begin position="277"/>
        <end position="333"/>
    </location>
</feature>
<feature type="compositionally biased region" description="Basic and acidic residues" evidence="4">
    <location>
        <begin position="28"/>
        <end position="49"/>
    </location>
</feature>
<feature type="compositionally biased region" description="Basic and acidic residues" evidence="4">
    <location>
        <begin position="162"/>
        <end position="186"/>
    </location>
</feature>
<feature type="compositionally biased region" description="Pro residues" evidence="4">
    <location>
        <begin position="286"/>
        <end position="295"/>
    </location>
</feature>
<feature type="modified residue" description="Phosphoserine" evidence="2">
    <location>
        <position position="23"/>
    </location>
</feature>
<feature type="modified residue" description="Phosphoserine" evidence="2">
    <location>
        <position position="253"/>
    </location>
</feature>
<feature type="modified residue" description="Phosphoserine" evidence="2">
    <location>
        <position position="438"/>
    </location>
</feature>
<feature type="modified residue" description="Phosphoserine" evidence="2">
    <location>
        <position position="463"/>
    </location>
</feature>
<feature type="cross-link" description="Glycyl lysine isopeptide (Lys-Gly) (interchain with G-Cter in ubiquitin)" evidence="2">
    <location>
        <position position="82"/>
    </location>
</feature>
<feature type="cross-link" description="Glycyl lysine isopeptide (Lys-Gly) (interchain with G-Cter in ubiquitin)" evidence="2">
    <location>
        <position position="91"/>
    </location>
</feature>